<feature type="chain" id="PRO_0000129140" description="Tol-Pal system protein TolR">
    <location>
        <begin position="1"/>
        <end position="142"/>
    </location>
</feature>
<feature type="topological domain" description="Cytoplasmic" evidence="18 19">
    <location>
        <begin position="1"/>
        <end position="17"/>
    </location>
</feature>
<feature type="transmembrane region" description="Helical" evidence="1">
    <location>
        <begin position="18"/>
        <end position="38"/>
    </location>
</feature>
<feature type="topological domain" description="Periplasmic" evidence="13 18">
    <location>
        <begin position="39"/>
        <end position="142"/>
    </location>
</feature>
<feature type="mutagenesis site" description="Decreases TolA-Pal interaction." evidence="3">
    <original>D</original>
    <variation>A</variation>
    <location>
        <position position="23"/>
    </location>
</feature>
<feature type="mutagenesis site" description="No change in TolA-Pal interaction." evidence="3">
    <original>D</original>
    <variation>E</variation>
    <location>
        <position position="23"/>
    </location>
</feature>
<feature type="mutagenesis site" description="Abolishes TolA-Pal interaction." evidence="3">
    <original>D</original>
    <variation>R</variation>
    <location>
        <position position="23"/>
    </location>
</feature>
<feature type="helix" evidence="21">
    <location>
        <begin position="52"/>
        <end position="57"/>
    </location>
</feature>
<feature type="strand" evidence="21">
    <location>
        <begin position="64"/>
        <end position="68"/>
    </location>
</feature>
<feature type="strand" evidence="21">
    <location>
        <begin position="74"/>
        <end position="78"/>
    </location>
</feature>
<feature type="strand" evidence="21">
    <location>
        <begin position="81"/>
        <end position="86"/>
    </location>
</feature>
<feature type="helix" evidence="21">
    <location>
        <begin position="88"/>
        <end position="101"/>
    </location>
</feature>
<feature type="strand" evidence="21">
    <location>
        <begin position="107"/>
        <end position="111"/>
    </location>
</feature>
<feature type="helix" evidence="21">
    <location>
        <begin position="117"/>
        <end position="129"/>
    </location>
</feature>
<feature type="strand" evidence="21">
    <location>
        <begin position="136"/>
        <end position="139"/>
    </location>
</feature>
<name>TOLR_ECOLI</name>
<protein>
    <recommendedName>
        <fullName evidence="1 15">Tol-Pal system protein TolR</fullName>
    </recommendedName>
</protein>
<accession>P0ABV6</accession>
<accession>P05829</accession>
<comment type="function">
    <text evidence="3 4 5 6 9 17">Part of the Tol-Pal system, which plays a role in outer membrane invagination during cell division and is important for maintaining outer membrane integrity (PubMed:1683466, PubMed:17233825). Required, with TolQ, for the proton motive force-dependent activation of TolA and for TolA-Pal interaction (PubMed:11722743). The Tol-Pal system is also required for polar localization of chemoreceptors clusters (PubMed:24720726). The system also appears to be required for the activity of several outer membrane-localized enzymes with cell wall remodeling activity (PubMed:32152098). Modeling suggests that non-covalent binding of OmpA (from the outer membrane) and TolR (from the inner membrane) to peptidoglycan maintains the position of the cell wall in the periplasm, holding it approximately equidistant from both the inner and outer membranes. Trimeric Lpp controls the width of the periplasm, adjusts its tilt angle to accommodate to the available space, and can compensate in part for an absence of OmpA (Probable).</text>
</comment>
<comment type="function">
    <text evidence="4 10">(Microbial infection) Involved in the uptake of group A colicins (colicins A, E1, E2, E3, and K) and in the uptake of filamentous phage DNA.</text>
</comment>
<comment type="subunit">
    <text evidence="2 8 11 16">The Tol-Pal system is composed of five core proteins: the inner membrane proteins TolA, TolQ and TolR, the periplasmic protein TolB and the outer membrane protein Pal. They form a network linking the inner and outer membranes and the peptidoglycan layer (PubMed:17233825). TolR forms homodimers (PubMed:10419942, PubMed:26354441). Interacts with the N-terminal domain of TolA and with TolQ (PubMed:10419942, PubMed:7744737).</text>
</comment>
<comment type="subcellular location">
    <subcellularLocation>
        <location evidence="1 12 13">Cell inner membrane</location>
        <topology evidence="1 13 18">Single-pass membrane protein</topology>
    </subcellularLocation>
    <text evidence="5">Accumulates at cell constriction sites. Recruitment to the division site is dependent on FtsN activity.</text>
</comment>
<comment type="domain">
    <text evidence="2 8">The N-terminal transmembrane domain is involved in interaction with TolA and TolQ, while the central and C-terminal domains are involved in dimerization. The C-terminal domain is also involved in interaction with TolA and in association with the membranes (PubMed:10419942). May undergo large scale structural remodeling, where the N- and C-terminal sequences unfold in order for the protein to both reach and bind the peptidoglycan layer around 90 Angstroms away from the inner membrane (PubMed:26354441).</text>
</comment>
<comment type="disruption phenotype">
    <text evidence="5 9">Mutants lacking the tol-pal cluster suffer delayed outer membrane invagination and contain large outer membrane blebs at constriction sites and cell poles (PubMed:17233825). Tol-pal mutants fail to complete division and form cell chains, and fail to process denuded peptidoglycans at the septum (PubMed:32152098).</text>
</comment>
<comment type="miscellaneous">
    <text evidence="7">There are about 900 TolR molecules per cell.</text>
</comment>
<comment type="similarity">
    <text evidence="1 15">Belongs to the ExbD/TolR family.</text>
</comment>
<reference key="1">
    <citation type="journal article" date="1987" name="J. Bacteriol.">
        <title>Nucleotide sequence of a gene cluster involved in entry of E colicins and single-stranded DNA of infecting filamentous bacteriophages into Escherichia coli.</title>
        <authorList>
            <person name="Sun T.-P."/>
            <person name="Webster R.E."/>
        </authorList>
    </citation>
    <scope>NUCLEOTIDE SEQUENCE [GENOMIC DNA]</scope>
    <scope>FUNCTION</scope>
</reference>
<reference key="2">
    <citation type="journal article" date="1996" name="DNA Res.">
        <title>A 718-kb DNA sequence of the Escherichia coli K-12 genome corresponding to the 12.7-28.0 min region on the linkage map.</title>
        <authorList>
            <person name="Oshima T."/>
            <person name="Aiba H."/>
            <person name="Baba T."/>
            <person name="Fujita K."/>
            <person name="Hayashi K."/>
            <person name="Honjo A."/>
            <person name="Ikemoto K."/>
            <person name="Inada T."/>
            <person name="Itoh T."/>
            <person name="Kajihara M."/>
            <person name="Kanai K."/>
            <person name="Kashimoto K."/>
            <person name="Kimura S."/>
            <person name="Kitagawa M."/>
            <person name="Makino K."/>
            <person name="Masuda S."/>
            <person name="Miki T."/>
            <person name="Mizobuchi K."/>
            <person name="Mori H."/>
            <person name="Motomura K."/>
            <person name="Nakamura Y."/>
            <person name="Nashimoto H."/>
            <person name="Nishio Y."/>
            <person name="Saito N."/>
            <person name="Sampei G."/>
            <person name="Seki Y."/>
            <person name="Tagami H."/>
            <person name="Takemoto K."/>
            <person name="Wada C."/>
            <person name="Yamamoto Y."/>
            <person name="Yano M."/>
            <person name="Horiuchi T."/>
        </authorList>
    </citation>
    <scope>NUCLEOTIDE SEQUENCE [LARGE SCALE GENOMIC DNA]</scope>
    <source>
        <strain>K12 / W3110 / ATCC 27325 / DSM 5911</strain>
    </source>
</reference>
<reference key="3">
    <citation type="journal article" date="1997" name="Science">
        <title>The complete genome sequence of Escherichia coli K-12.</title>
        <authorList>
            <person name="Blattner F.R."/>
            <person name="Plunkett G. III"/>
            <person name="Bloch C.A."/>
            <person name="Perna N.T."/>
            <person name="Burland V."/>
            <person name="Riley M."/>
            <person name="Collado-Vides J."/>
            <person name="Glasner J.D."/>
            <person name="Rode C.K."/>
            <person name="Mayhew G.F."/>
            <person name="Gregor J."/>
            <person name="Davis N.W."/>
            <person name="Kirkpatrick H.A."/>
            <person name="Goeden M.A."/>
            <person name="Rose D.J."/>
            <person name="Mau B."/>
            <person name="Shao Y."/>
        </authorList>
    </citation>
    <scope>NUCLEOTIDE SEQUENCE [LARGE SCALE GENOMIC DNA]</scope>
    <source>
        <strain>K12 / MG1655 / ATCC 47076</strain>
    </source>
</reference>
<reference key="4">
    <citation type="journal article" date="2006" name="Mol. Syst. Biol.">
        <title>Highly accurate genome sequences of Escherichia coli K-12 strains MG1655 and W3110.</title>
        <authorList>
            <person name="Hayashi K."/>
            <person name="Morooka N."/>
            <person name="Yamamoto Y."/>
            <person name="Fujita K."/>
            <person name="Isono K."/>
            <person name="Choi S."/>
            <person name="Ohtsubo E."/>
            <person name="Baba T."/>
            <person name="Wanner B.L."/>
            <person name="Mori H."/>
            <person name="Horiuchi T."/>
        </authorList>
    </citation>
    <scope>NUCLEOTIDE SEQUENCE [LARGE SCALE GENOMIC DNA]</scope>
    <source>
        <strain>K12 / W3110 / ATCC 27325 / DSM 5911</strain>
    </source>
</reference>
<reference key="5">
    <citation type="journal article" date="1991" name="Mol. Microbiol.">
        <title>The tol gene products and the import of macromolecules into Escherichia coli.</title>
        <authorList>
            <person name="Webster R.E."/>
        </authorList>
    </citation>
    <scope>FUNCTION</scope>
</reference>
<reference key="6">
    <citation type="journal article" date="1993" name="J. Bacteriol.">
        <title>Membrane topologies of the TolQ and TolR proteins of Escherichia coli: inactivation of TolQ by a missense mutation in the proposed first transmembrane segment.</title>
        <authorList>
            <person name="Kampfenkel K."/>
            <person name="Braun V."/>
        </authorList>
    </citation>
    <scope>SUBCELLULAR LOCATION</scope>
    <scope>TOPOLOGY</scope>
</reference>
<reference key="7">
    <citation type="journal article" date="1993" name="J. Bacteriol.">
        <title>Membrane topology of the Escherichia coli TolR protein required for cell envelope integrity.</title>
        <authorList>
            <person name="Muller M.M."/>
            <person name="Vianney A."/>
            <person name="Lazzaroni J.-C."/>
            <person name="Webster R.E."/>
            <person name="Portalier R."/>
        </authorList>
    </citation>
    <scope>SUBCELLULAR LOCATION</scope>
    <scope>TOPOLOGY</scope>
</reference>
<reference key="8">
    <citation type="journal article" date="1995" name="J. Biol. Chem.">
        <title>Protein complex within Escherichia coli inner membrane. TolA N-terminal domain interacts with TolQ and TolR proteins.</title>
        <authorList>
            <person name="Derouiche R."/>
            <person name="Benedetti H."/>
            <person name="Lazzaroni J.C."/>
            <person name="Lazdunski C."/>
            <person name="Lloubes R."/>
        </authorList>
    </citation>
    <scope>INTERACTION WITH TOLA</scope>
</reference>
<reference key="9">
    <citation type="journal article" date="1999" name="J. Bacteriol.">
        <title>Role of TolR N-terminal, central, and C-terminal domains in dimerization and interaction with TolA and tolQ.</title>
        <authorList>
            <person name="Journet L."/>
            <person name="Rigal A."/>
            <person name="Lazdunski C."/>
            <person name="Benedetti H."/>
        </authorList>
    </citation>
    <scope>SUBUNIT</scope>
    <scope>INTERACTION WITH TOLA AND TOLQ</scope>
    <scope>DOMAIN</scope>
    <source>
        <strain>K12 / W3110 / ATCC 27325 / DSM 5911</strain>
    </source>
</reference>
<reference key="10">
    <citation type="journal article" date="2001" name="Mol. Microbiol.">
        <title>The TolQ-TolR proteins energize TolA and share homologies with the flagellar motor proteins MotA-MotB.</title>
        <authorList>
            <person name="Cascales E."/>
            <person name="Lloubes R."/>
            <person name="Sturgis J.N."/>
        </authorList>
    </citation>
    <scope>FUNCTION</scope>
    <scope>MUTAGENESIS OF ASP-23</scope>
</reference>
<reference key="11">
    <citation type="journal article" date="2007" name="Mol. Microbiol.">
        <title>The trans-envelope Tol-Pal complex is part of the cell division machinery and required for proper outer-membrane invagination during cell constriction in E. coli.</title>
        <authorList>
            <person name="Gerding M.A."/>
            <person name="Ogata Y."/>
            <person name="Pecora N.D."/>
            <person name="Niki H."/>
            <person name="de Boer P.A."/>
        </authorList>
    </citation>
    <scope>FUNCTION</scope>
    <scope>SUBUNIT</scope>
    <scope>SUBCELLULAR LOCATION</scope>
    <scope>DISRUPTION PHENOTYPE</scope>
    <source>
        <strain>K12 / MG1655 / ATCC 47076</strain>
    </source>
</reference>
<reference key="12">
    <citation type="journal article" date="2014" name="Cell">
        <title>Quantifying absolute protein synthesis rates reveals principles underlying allocation of cellular resources.</title>
        <authorList>
            <person name="Li G.W."/>
            <person name="Burkhardt D."/>
            <person name="Gross C."/>
            <person name="Weissman J.S."/>
        </authorList>
    </citation>
    <scope>PROTEIN COPY NUMBER</scope>
    <source>
        <strain>K12 / MG1655 / ATCC 47076</strain>
    </source>
</reference>
<reference key="13">
    <citation type="journal article" date="2014" name="Mol. Microbiol.">
        <title>Polar localization of Escherichia coli chemoreceptors requires an intact Tol-Pal complex.</title>
        <authorList>
            <person name="Santos T.M."/>
            <person name="Lin T.Y."/>
            <person name="Rajendran M."/>
            <person name="Anderson S.M."/>
            <person name="Weibel D.B."/>
        </authorList>
    </citation>
    <scope>FUNCTION</scope>
</reference>
<reference key="14">
    <citation type="journal article" date="2019" name="Structure">
        <title>Binding from both sides: TolR and full-length OmpA bind and maintain the local structure of the E. coli cell wall.</title>
        <authorList>
            <person name="Boags A.T."/>
            <person name="Samsudin F."/>
            <person name="Khalid S."/>
        </authorList>
    </citation>
    <scope>MODELING OF FUNCTION</scope>
    <scope>DOMAIN</scope>
    <scope>PEPTIDOGLYCAN-BINDING</scope>
</reference>
<reference key="15">
    <citation type="journal article" date="2020" name="Proc. Natl. Acad. Sci. U.S.A.">
        <title>The Tol-Pal system is required for peptidoglycan-cleaving enzymes to complete bacterial cell division.</title>
        <authorList>
            <person name="Yakhnina A.A."/>
            <person name="Bernhardt T.G."/>
        </authorList>
    </citation>
    <scope>FUNCTION</scope>
    <scope>DISRUPTION PHENOTYPE</scope>
</reference>
<reference evidence="20" key="16">
    <citation type="journal article" date="2015" name="J. Biol. Chem.">
        <title>Structure and function of the Escherichia coli Tol-Pal stator protein TolR.</title>
        <authorList>
            <person name="Wojdyla J.A."/>
            <person name="Cutts E."/>
            <person name="Kaminska R."/>
            <person name="Papadakos G."/>
            <person name="Hopper J.T."/>
            <person name="Stansfeld P.J."/>
            <person name="Staunton D."/>
            <person name="Robinson C.V."/>
            <person name="Kleanthous C."/>
        </authorList>
    </citation>
    <scope>X-RAY CRYSTALLOGRAPHY (1.70 ANGSTROMS) OF 36-142</scope>
    <scope>SUBUNIT</scope>
    <scope>DOMAIN</scope>
    <source>
        <strain>K12</strain>
    </source>
</reference>
<dbReference type="EMBL" id="M16489">
    <property type="protein sequence ID" value="AAA83921.1"/>
    <property type="molecule type" value="Genomic_DNA"/>
</dbReference>
<dbReference type="EMBL" id="U00096">
    <property type="protein sequence ID" value="AAC73832.1"/>
    <property type="molecule type" value="Genomic_DNA"/>
</dbReference>
<dbReference type="EMBL" id="AP009048">
    <property type="protein sequence ID" value="BAA35404.1"/>
    <property type="molecule type" value="Genomic_DNA"/>
</dbReference>
<dbReference type="PIR" id="C25980">
    <property type="entry name" value="BVECTR"/>
</dbReference>
<dbReference type="RefSeq" id="NP_415266.1">
    <property type="nucleotide sequence ID" value="NC_000913.3"/>
</dbReference>
<dbReference type="RefSeq" id="WP_000090097.1">
    <property type="nucleotide sequence ID" value="NZ_STEB01000035.1"/>
</dbReference>
<dbReference type="PDB" id="5BY4">
    <property type="method" value="X-ray"/>
    <property type="resolution" value="1.70 A"/>
    <property type="chains" value="A=36-142"/>
</dbReference>
<dbReference type="PDB" id="8ODT">
    <property type="method" value="EM"/>
    <property type="resolution" value="4.20 A"/>
    <property type="chains" value="F/G=1-142"/>
</dbReference>
<dbReference type="PDBsum" id="5BY4"/>
<dbReference type="PDBsum" id="8ODT"/>
<dbReference type="EMDB" id="EMD-16816"/>
<dbReference type="SMR" id="P0ABV6"/>
<dbReference type="BioGRID" id="4261829">
    <property type="interactions" value="235"/>
</dbReference>
<dbReference type="BioGRID" id="849704">
    <property type="interactions" value="1"/>
</dbReference>
<dbReference type="ComplexPortal" id="CPX-5782">
    <property type="entry name" value="Tol-Pal cell envelope complex"/>
</dbReference>
<dbReference type="DIP" id="DIP-48143N"/>
<dbReference type="FunCoup" id="P0ABV6">
    <property type="interactions" value="177"/>
</dbReference>
<dbReference type="IntAct" id="P0ABV6">
    <property type="interactions" value="4"/>
</dbReference>
<dbReference type="STRING" id="511145.b0738"/>
<dbReference type="jPOST" id="P0ABV6"/>
<dbReference type="PaxDb" id="511145-b0738"/>
<dbReference type="EnsemblBacteria" id="AAC73832">
    <property type="protein sequence ID" value="AAC73832"/>
    <property type="gene ID" value="b0738"/>
</dbReference>
<dbReference type="GeneID" id="93776746"/>
<dbReference type="GeneID" id="945328"/>
<dbReference type="KEGG" id="ecj:JW0728"/>
<dbReference type="KEGG" id="eco:b0738"/>
<dbReference type="KEGG" id="ecoc:C3026_03705"/>
<dbReference type="PATRIC" id="fig|1411691.4.peg.1534"/>
<dbReference type="EchoBASE" id="EB1004"/>
<dbReference type="eggNOG" id="COG0848">
    <property type="taxonomic scope" value="Bacteria"/>
</dbReference>
<dbReference type="HOGENOM" id="CLU_085305_1_3_6"/>
<dbReference type="InParanoid" id="P0ABV6"/>
<dbReference type="OMA" id="QPMSEIN"/>
<dbReference type="OrthoDB" id="9798629at2"/>
<dbReference type="PhylomeDB" id="P0ABV6"/>
<dbReference type="BioCyc" id="EcoCyc:EG11011-MONOMER"/>
<dbReference type="EvolutionaryTrace" id="P0ABV6"/>
<dbReference type="PRO" id="PR:P0ABV6"/>
<dbReference type="Proteomes" id="UP000000625">
    <property type="component" value="Chromosome"/>
</dbReference>
<dbReference type="GO" id="GO:0032153">
    <property type="term" value="C:cell division site"/>
    <property type="evidence" value="ECO:0000314"/>
    <property type="project" value="EcoCyc"/>
</dbReference>
<dbReference type="GO" id="GO:0016020">
    <property type="term" value="C:membrane"/>
    <property type="evidence" value="ECO:0000303"/>
    <property type="project" value="ComplexPortal"/>
</dbReference>
<dbReference type="GO" id="GO:0005886">
    <property type="term" value="C:plasma membrane"/>
    <property type="evidence" value="ECO:0000314"/>
    <property type="project" value="EcoCyc"/>
</dbReference>
<dbReference type="GO" id="GO:0022857">
    <property type="term" value="F:transmembrane transporter activity"/>
    <property type="evidence" value="ECO:0007669"/>
    <property type="project" value="InterPro"/>
</dbReference>
<dbReference type="GO" id="GO:0043213">
    <property type="term" value="P:bacteriocin transport"/>
    <property type="evidence" value="ECO:0000315"/>
    <property type="project" value="EcoliWiki"/>
</dbReference>
<dbReference type="GO" id="GO:0051301">
    <property type="term" value="P:cell division"/>
    <property type="evidence" value="ECO:0000269"/>
    <property type="project" value="EcoCyc"/>
</dbReference>
<dbReference type="GO" id="GO:0090529">
    <property type="term" value="P:cell septum assembly"/>
    <property type="evidence" value="ECO:0000269"/>
    <property type="project" value="EcoCyc"/>
</dbReference>
<dbReference type="GO" id="GO:0015031">
    <property type="term" value="P:protein transport"/>
    <property type="evidence" value="ECO:0007669"/>
    <property type="project" value="InterPro"/>
</dbReference>
<dbReference type="GO" id="GO:1905153">
    <property type="term" value="P:regulation of membrane invagination"/>
    <property type="evidence" value="ECO:0000303"/>
    <property type="project" value="ComplexPortal"/>
</dbReference>
<dbReference type="FunFam" id="3.30.420.270:FF:000001">
    <property type="entry name" value="Tol-Pal system protein TolR"/>
    <property type="match status" value="1"/>
</dbReference>
<dbReference type="Gene3D" id="3.30.420.270">
    <property type="match status" value="1"/>
</dbReference>
<dbReference type="HAMAP" id="MF_02203">
    <property type="entry name" value="TolR"/>
    <property type="match status" value="1"/>
</dbReference>
<dbReference type="InterPro" id="IPR003400">
    <property type="entry name" value="ExbD"/>
</dbReference>
<dbReference type="InterPro" id="IPR014168">
    <property type="entry name" value="Tol-Pal_TolR"/>
</dbReference>
<dbReference type="NCBIfam" id="NF008248">
    <property type="entry name" value="PRK11024.1"/>
    <property type="match status" value="1"/>
</dbReference>
<dbReference type="NCBIfam" id="TIGR02801">
    <property type="entry name" value="tolR"/>
    <property type="match status" value="1"/>
</dbReference>
<dbReference type="PANTHER" id="PTHR30558">
    <property type="entry name" value="EXBD MEMBRANE COMPONENT OF PMF-DRIVEN MACROMOLECULE IMPORT SYSTEM"/>
    <property type="match status" value="1"/>
</dbReference>
<dbReference type="PANTHER" id="PTHR30558:SF7">
    <property type="entry name" value="TOL-PAL SYSTEM PROTEIN TOLR"/>
    <property type="match status" value="1"/>
</dbReference>
<dbReference type="Pfam" id="PF02472">
    <property type="entry name" value="ExbD"/>
    <property type="match status" value="1"/>
</dbReference>
<proteinExistence type="evidence at protein level"/>
<keyword id="KW-0002">3D-structure</keyword>
<keyword id="KW-0131">Cell cycle</keyword>
<keyword id="KW-0132">Cell division</keyword>
<keyword id="KW-0997">Cell inner membrane</keyword>
<keyword id="KW-1003">Cell membrane</keyword>
<keyword id="KW-0472">Membrane</keyword>
<keyword id="KW-1185">Reference proteome</keyword>
<keyword id="KW-0812">Transmembrane</keyword>
<keyword id="KW-1133">Transmembrane helix</keyword>
<sequence>MARARGRGRRDLKSEINIVPLLDVLLVLLLIFMATAPIITQSVEVDLPDATESQAVSSNDNPPVIVEVSGIGQYTVVVEKDRLERLPPEQVVAEVSSRFKANPKTVFLIGGAKDVPYDEIIKALNLLHSAGVKSVGLMTQPI</sequence>
<evidence type="ECO:0000255" key="1">
    <source>
        <dbReference type="HAMAP-Rule" id="MF_02203"/>
    </source>
</evidence>
<evidence type="ECO:0000269" key="2">
    <source>
    </source>
</evidence>
<evidence type="ECO:0000269" key="3">
    <source>
    </source>
</evidence>
<evidence type="ECO:0000269" key="4">
    <source>
    </source>
</evidence>
<evidence type="ECO:0000269" key="5">
    <source>
    </source>
</evidence>
<evidence type="ECO:0000269" key="6">
    <source>
    </source>
</evidence>
<evidence type="ECO:0000269" key="7">
    <source>
    </source>
</evidence>
<evidence type="ECO:0000269" key="8">
    <source>
    </source>
</evidence>
<evidence type="ECO:0000269" key="9">
    <source>
    </source>
</evidence>
<evidence type="ECO:0000269" key="10">
    <source>
    </source>
</evidence>
<evidence type="ECO:0000269" key="11">
    <source>
    </source>
</evidence>
<evidence type="ECO:0000269" key="12">
    <source>
    </source>
</evidence>
<evidence type="ECO:0000269" key="13">
    <source>
    </source>
</evidence>
<evidence type="ECO:0000303" key="14">
    <source>
    </source>
</evidence>
<evidence type="ECO:0000305" key="15"/>
<evidence type="ECO:0000305" key="16">
    <source>
    </source>
</evidence>
<evidence type="ECO:0000305" key="17">
    <source>
    </source>
</evidence>
<evidence type="ECO:0000305" key="18">
    <source>
    </source>
</evidence>
<evidence type="ECO:0000305" key="19">
    <source>
    </source>
</evidence>
<evidence type="ECO:0007744" key="20">
    <source>
        <dbReference type="PDB" id="5BY4"/>
    </source>
</evidence>
<evidence type="ECO:0007829" key="21">
    <source>
        <dbReference type="PDB" id="5BY4"/>
    </source>
</evidence>
<gene>
    <name evidence="1 14" type="primary">tolR</name>
    <name type="ordered locus">b0738</name>
    <name type="ordered locus">JW0728</name>
</gene>
<organism>
    <name type="scientific">Escherichia coli (strain K12)</name>
    <dbReference type="NCBI Taxonomy" id="83333"/>
    <lineage>
        <taxon>Bacteria</taxon>
        <taxon>Pseudomonadati</taxon>
        <taxon>Pseudomonadota</taxon>
        <taxon>Gammaproteobacteria</taxon>
        <taxon>Enterobacterales</taxon>
        <taxon>Enterobacteriaceae</taxon>
        <taxon>Escherichia</taxon>
    </lineage>
</organism>